<reference key="1">
    <citation type="journal article" date="1999" name="Nature">
        <title>Sequence and analysis of chromosome 4 of the plant Arabidopsis thaliana.</title>
        <authorList>
            <person name="Mayer K.F.X."/>
            <person name="Schueller C."/>
            <person name="Wambutt R."/>
            <person name="Murphy G."/>
            <person name="Volckaert G."/>
            <person name="Pohl T."/>
            <person name="Duesterhoeft A."/>
            <person name="Stiekema W."/>
            <person name="Entian K.-D."/>
            <person name="Terryn N."/>
            <person name="Harris B."/>
            <person name="Ansorge W."/>
            <person name="Brandt P."/>
            <person name="Grivell L.A."/>
            <person name="Rieger M."/>
            <person name="Weichselgartner M."/>
            <person name="de Simone V."/>
            <person name="Obermaier B."/>
            <person name="Mache R."/>
            <person name="Mueller M."/>
            <person name="Kreis M."/>
            <person name="Delseny M."/>
            <person name="Puigdomenech P."/>
            <person name="Watson M."/>
            <person name="Schmidtheini T."/>
            <person name="Reichert B."/>
            <person name="Portetelle D."/>
            <person name="Perez-Alonso M."/>
            <person name="Boutry M."/>
            <person name="Bancroft I."/>
            <person name="Vos P."/>
            <person name="Hoheisel J."/>
            <person name="Zimmermann W."/>
            <person name="Wedler H."/>
            <person name="Ridley P."/>
            <person name="Langham S.-A."/>
            <person name="McCullagh B."/>
            <person name="Bilham L."/>
            <person name="Robben J."/>
            <person name="van der Schueren J."/>
            <person name="Grymonprez B."/>
            <person name="Chuang Y.-J."/>
            <person name="Vandenbussche F."/>
            <person name="Braeken M."/>
            <person name="Weltjens I."/>
            <person name="Voet M."/>
            <person name="Bastiaens I."/>
            <person name="Aert R."/>
            <person name="Defoor E."/>
            <person name="Weitzenegger T."/>
            <person name="Bothe G."/>
            <person name="Ramsperger U."/>
            <person name="Hilbert H."/>
            <person name="Braun M."/>
            <person name="Holzer E."/>
            <person name="Brandt A."/>
            <person name="Peters S."/>
            <person name="van Staveren M."/>
            <person name="Dirkse W."/>
            <person name="Mooijman P."/>
            <person name="Klein Lankhorst R."/>
            <person name="Rose M."/>
            <person name="Hauf J."/>
            <person name="Koetter P."/>
            <person name="Berneiser S."/>
            <person name="Hempel S."/>
            <person name="Feldpausch M."/>
            <person name="Lamberth S."/>
            <person name="Van den Daele H."/>
            <person name="De Keyser A."/>
            <person name="Buysshaert C."/>
            <person name="Gielen J."/>
            <person name="Villarroel R."/>
            <person name="De Clercq R."/>
            <person name="van Montagu M."/>
            <person name="Rogers J."/>
            <person name="Cronin A."/>
            <person name="Quail M.A."/>
            <person name="Bray-Allen S."/>
            <person name="Clark L."/>
            <person name="Doggett J."/>
            <person name="Hall S."/>
            <person name="Kay M."/>
            <person name="Lennard N."/>
            <person name="McLay K."/>
            <person name="Mayes R."/>
            <person name="Pettett A."/>
            <person name="Rajandream M.A."/>
            <person name="Lyne M."/>
            <person name="Benes V."/>
            <person name="Rechmann S."/>
            <person name="Borkova D."/>
            <person name="Bloecker H."/>
            <person name="Scharfe M."/>
            <person name="Grimm M."/>
            <person name="Loehnert T.-H."/>
            <person name="Dose S."/>
            <person name="de Haan M."/>
            <person name="Maarse A.C."/>
            <person name="Schaefer M."/>
            <person name="Mueller-Auer S."/>
            <person name="Gabel C."/>
            <person name="Fuchs M."/>
            <person name="Fartmann B."/>
            <person name="Granderath K."/>
            <person name="Dauner D."/>
            <person name="Herzl A."/>
            <person name="Neumann S."/>
            <person name="Argiriou A."/>
            <person name="Vitale D."/>
            <person name="Liguori R."/>
            <person name="Piravandi E."/>
            <person name="Massenet O."/>
            <person name="Quigley F."/>
            <person name="Clabauld G."/>
            <person name="Muendlein A."/>
            <person name="Felber R."/>
            <person name="Schnabl S."/>
            <person name="Hiller R."/>
            <person name="Schmidt W."/>
            <person name="Lecharny A."/>
            <person name="Aubourg S."/>
            <person name="Chefdor F."/>
            <person name="Cooke R."/>
            <person name="Berger C."/>
            <person name="Monfort A."/>
            <person name="Casacuberta E."/>
            <person name="Gibbons T."/>
            <person name="Weber N."/>
            <person name="Vandenbol M."/>
            <person name="Bargues M."/>
            <person name="Terol J."/>
            <person name="Torres A."/>
            <person name="Perez-Perez A."/>
            <person name="Purnelle B."/>
            <person name="Bent E."/>
            <person name="Johnson S."/>
            <person name="Tacon D."/>
            <person name="Jesse T."/>
            <person name="Heijnen L."/>
            <person name="Schwarz S."/>
            <person name="Scholler P."/>
            <person name="Heber S."/>
            <person name="Francs P."/>
            <person name="Bielke C."/>
            <person name="Frishman D."/>
            <person name="Haase D."/>
            <person name="Lemcke K."/>
            <person name="Mewes H.-W."/>
            <person name="Stocker S."/>
            <person name="Zaccaria P."/>
            <person name="Bevan M."/>
            <person name="Wilson R.K."/>
            <person name="de la Bastide M."/>
            <person name="Habermann K."/>
            <person name="Parnell L."/>
            <person name="Dedhia N."/>
            <person name="Gnoj L."/>
            <person name="Schutz K."/>
            <person name="Huang E."/>
            <person name="Spiegel L."/>
            <person name="Sekhon M."/>
            <person name="Murray J."/>
            <person name="Sheet P."/>
            <person name="Cordes M."/>
            <person name="Abu-Threideh J."/>
            <person name="Stoneking T."/>
            <person name="Kalicki J."/>
            <person name="Graves T."/>
            <person name="Harmon G."/>
            <person name="Edwards J."/>
            <person name="Latreille P."/>
            <person name="Courtney L."/>
            <person name="Cloud J."/>
            <person name="Abbott A."/>
            <person name="Scott K."/>
            <person name="Johnson D."/>
            <person name="Minx P."/>
            <person name="Bentley D."/>
            <person name="Fulton B."/>
            <person name="Miller N."/>
            <person name="Greco T."/>
            <person name="Kemp K."/>
            <person name="Kramer J."/>
            <person name="Fulton L."/>
            <person name="Mardis E."/>
            <person name="Dante M."/>
            <person name="Pepin K."/>
            <person name="Hillier L.W."/>
            <person name="Nelson J."/>
            <person name="Spieth J."/>
            <person name="Ryan E."/>
            <person name="Andrews S."/>
            <person name="Geisel C."/>
            <person name="Layman D."/>
            <person name="Du H."/>
            <person name="Ali J."/>
            <person name="Berghoff A."/>
            <person name="Jones K."/>
            <person name="Drone K."/>
            <person name="Cotton M."/>
            <person name="Joshu C."/>
            <person name="Antonoiu B."/>
            <person name="Zidanic M."/>
            <person name="Strong C."/>
            <person name="Sun H."/>
            <person name="Lamar B."/>
            <person name="Yordan C."/>
            <person name="Ma P."/>
            <person name="Zhong J."/>
            <person name="Preston R."/>
            <person name="Vil D."/>
            <person name="Shekher M."/>
            <person name="Matero A."/>
            <person name="Shah R."/>
            <person name="Swaby I.K."/>
            <person name="O'Shaughnessy A."/>
            <person name="Rodriguez M."/>
            <person name="Hoffman J."/>
            <person name="Till S."/>
            <person name="Granat S."/>
            <person name="Shohdy N."/>
            <person name="Hasegawa A."/>
            <person name="Hameed A."/>
            <person name="Lodhi M."/>
            <person name="Johnson A."/>
            <person name="Chen E."/>
            <person name="Marra M.A."/>
            <person name="Martienssen R."/>
            <person name="McCombie W.R."/>
        </authorList>
    </citation>
    <scope>NUCLEOTIDE SEQUENCE [LARGE SCALE GENOMIC DNA]</scope>
    <source>
        <strain>cv. Columbia</strain>
    </source>
</reference>
<reference key="2">
    <citation type="journal article" date="2017" name="Plant J.">
        <title>Araport11: a complete reannotation of the Arabidopsis thaliana reference genome.</title>
        <authorList>
            <person name="Cheng C.Y."/>
            <person name="Krishnakumar V."/>
            <person name="Chan A.P."/>
            <person name="Thibaud-Nissen F."/>
            <person name="Schobel S."/>
            <person name="Town C.D."/>
        </authorList>
    </citation>
    <scope>GENOME REANNOTATION</scope>
    <source>
        <strain>cv. Columbia</strain>
    </source>
</reference>
<reference key="3">
    <citation type="journal article" date="2002" name="Science">
        <title>Functional annotation of a full-length Arabidopsis cDNA collection.</title>
        <authorList>
            <person name="Seki M."/>
            <person name="Narusaka M."/>
            <person name="Kamiya A."/>
            <person name="Ishida J."/>
            <person name="Satou M."/>
            <person name="Sakurai T."/>
            <person name="Nakajima M."/>
            <person name="Enju A."/>
            <person name="Akiyama K."/>
            <person name="Oono Y."/>
            <person name="Muramatsu M."/>
            <person name="Hayashizaki Y."/>
            <person name="Kawai J."/>
            <person name="Carninci P."/>
            <person name="Itoh M."/>
            <person name="Ishii Y."/>
            <person name="Arakawa T."/>
            <person name="Shibata K."/>
            <person name="Shinagawa A."/>
            <person name="Shinozaki K."/>
        </authorList>
    </citation>
    <scope>NUCLEOTIDE SEQUENCE [LARGE SCALE MRNA]</scope>
    <source>
        <strain>cv. Columbia</strain>
    </source>
</reference>
<reference key="4">
    <citation type="journal article" date="2003" name="Science">
        <title>Empirical analysis of transcriptional activity in the Arabidopsis genome.</title>
        <authorList>
            <person name="Yamada K."/>
            <person name="Lim J."/>
            <person name="Dale J.M."/>
            <person name="Chen H."/>
            <person name="Shinn P."/>
            <person name="Palm C.J."/>
            <person name="Southwick A.M."/>
            <person name="Wu H.C."/>
            <person name="Kim C.J."/>
            <person name="Nguyen M."/>
            <person name="Pham P.K."/>
            <person name="Cheuk R.F."/>
            <person name="Karlin-Newmann G."/>
            <person name="Liu S.X."/>
            <person name="Lam B."/>
            <person name="Sakano H."/>
            <person name="Wu T."/>
            <person name="Yu G."/>
            <person name="Miranda M."/>
            <person name="Quach H.L."/>
            <person name="Tripp M."/>
            <person name="Chang C.H."/>
            <person name="Lee J.M."/>
            <person name="Toriumi M.J."/>
            <person name="Chan M.M."/>
            <person name="Tang C.C."/>
            <person name="Onodera C.S."/>
            <person name="Deng J.M."/>
            <person name="Akiyama K."/>
            <person name="Ansari Y."/>
            <person name="Arakawa T."/>
            <person name="Banh J."/>
            <person name="Banno F."/>
            <person name="Bowser L."/>
            <person name="Brooks S.Y."/>
            <person name="Carninci P."/>
            <person name="Chao Q."/>
            <person name="Choy N."/>
            <person name="Enju A."/>
            <person name="Goldsmith A.D."/>
            <person name="Gurjal M."/>
            <person name="Hansen N.F."/>
            <person name="Hayashizaki Y."/>
            <person name="Johnson-Hopson C."/>
            <person name="Hsuan V.W."/>
            <person name="Iida K."/>
            <person name="Karnes M."/>
            <person name="Khan S."/>
            <person name="Koesema E."/>
            <person name="Ishida J."/>
            <person name="Jiang P.X."/>
            <person name="Jones T."/>
            <person name="Kawai J."/>
            <person name="Kamiya A."/>
            <person name="Meyers C."/>
            <person name="Nakajima M."/>
            <person name="Narusaka M."/>
            <person name="Seki M."/>
            <person name="Sakurai T."/>
            <person name="Satou M."/>
            <person name="Tamse R."/>
            <person name="Vaysberg M."/>
            <person name="Wallender E.K."/>
            <person name="Wong C."/>
            <person name="Yamamura Y."/>
            <person name="Yuan S."/>
            <person name="Shinozaki K."/>
            <person name="Davis R.W."/>
            <person name="Theologis A."/>
            <person name="Ecker J.R."/>
        </authorList>
    </citation>
    <scope>NUCLEOTIDE SEQUENCE [LARGE SCALE MRNA]</scope>
    <source>
        <strain>cv. Columbia</strain>
    </source>
</reference>
<reference key="5">
    <citation type="journal article" date="2008" name="Cell">
        <title>A complex containing PGRL1 and PGR5 is involved in the switch between linear and cyclic electron flow in Arabidopsis.</title>
        <authorList>
            <person name="DalCorso G."/>
            <person name="Pesaresi P."/>
            <person name="Masiero S."/>
            <person name="Aseeva E."/>
            <person name="Schuenemann D."/>
            <person name="Finazzi G."/>
            <person name="Joliot P."/>
            <person name="Barbato R."/>
            <person name="Leister D."/>
        </authorList>
    </citation>
    <scope>FUNCTION</scope>
    <scope>SUBCELLULAR LOCATION</scope>
    <scope>INTERACTION WITH PGR5</scope>
    <scope>FD2</scope>
    <scope>PASD1</scope>
    <scope>LFNR1 AND LFNR2</scope>
    <scope>DISRUPTION PHENOTYPE</scope>
    <source>
        <strain>cv. Columbia</strain>
    </source>
</reference>
<reference key="6">
    <citation type="journal article" date="2010" name="J. Plant Physiol.">
        <title>Drought stress-induced upregulation of components involved in ferredoxin-dependent cyclic electron transfer.</title>
        <authorList>
            <person name="Lehtimaeki N."/>
            <person name="Lintala M."/>
            <person name="Allahverdiyeva Y."/>
            <person name="Aro E.M."/>
            <person name="Mulo P."/>
        </authorList>
    </citation>
    <scope>INDUCTION BY DROUGHT</scope>
</reference>
<reference key="7">
    <citation type="journal article" date="2012" name="Mol. Cell. Proteomics">
        <title>Comparative large-scale characterisation of plant vs. mammal proteins reveals similar and idiosyncratic N-alpha acetylation features.</title>
        <authorList>
            <person name="Bienvenut W.V."/>
            <person name="Sumpton D."/>
            <person name="Martinez A."/>
            <person name="Lilla S."/>
            <person name="Espagne C."/>
            <person name="Meinnel T."/>
            <person name="Giglione C."/>
        </authorList>
    </citation>
    <scope>ACETYLATION [LARGE SCALE ANALYSIS] AT ALA-50</scope>
    <scope>CLEAVAGE OF TRANSIT PEPTIDE [LARGE SCALE ANALYSIS] AFTER LYS-49</scope>
    <scope>IDENTIFICATION BY MASS SPECTROMETRY [LARGE SCALE ANALYSIS]</scope>
</reference>
<reference key="8">
    <citation type="journal article" date="2013" name="Mol. Cell">
        <title>PGRL1 is the elusive ferredoxin-plastoquinone reductase in photosynthetic cyclic electron flow.</title>
        <authorList>
            <person name="Hertle A.P."/>
            <person name="Blunder T."/>
            <person name="Wunder T."/>
            <person name="Pesaresi P."/>
            <person name="Pribil M."/>
            <person name="Armbruster U."/>
            <person name="Leister D."/>
        </authorList>
    </citation>
    <scope>FUNCTION</scope>
</reference>
<sequence>MAFTLTIPRFSAISRKPITCSSSRTQCPAPFTHGRSISLRRRLTLLPLKASTDQSGQVGGEEVDSKILPYCSINKNEKRTIGEMEQEFLQAMQSFYYEGKAIMSNEEFDNLKEELMWEGSSVVMLSSDEQRFLEASMAYVSGNPILSDEEYDKLKMKLKMDGSEIVCEGPRCSLRSKKVYSDLAIDYFKMFLLNVPATVVALGLFFFLDDITGFEITYLLELPEPFSFIFTWFAAVPAIVYLALSLTKLILKDFLILKGPCPNCGTENVSFFGTILSIPNDSNTNNVKCSGCGTEMVYDSGSRLITLPEGGKA</sequence>
<proteinExistence type="evidence at protein level"/>
<feature type="transit peptide" description="Chloroplast" evidence="5 6">
    <location>
        <begin position="1"/>
        <end position="49"/>
    </location>
</feature>
<feature type="chain" id="PRO_0000322593" description="PGR5-like protein 1B, chloroplastic">
    <location>
        <begin position="50"/>
        <end position="313"/>
    </location>
</feature>
<feature type="topological domain" description="Stromal">
    <location>
        <begin position="50"/>
        <end position="187"/>
    </location>
</feature>
<feature type="transmembrane region" description="Helical; Name=1">
    <location>
        <begin position="188"/>
        <end position="208"/>
    </location>
</feature>
<feature type="topological domain" description="Lumenal, thylakoid">
    <location>
        <begin position="209"/>
        <end position="225"/>
    </location>
</feature>
<feature type="transmembrane region" description="Helical; Name=2">
    <location>
        <begin position="226"/>
        <end position="246"/>
    </location>
</feature>
<feature type="topological domain" description="Stromal">
    <location>
        <begin position="247"/>
        <end position="313"/>
    </location>
</feature>
<feature type="modified residue" description="N-acetylalanine" evidence="6">
    <location>
        <position position="50"/>
    </location>
</feature>
<feature type="disulfide bond" description="In monomeric form">
    <location>
        <begin position="71"/>
        <end position="172"/>
    </location>
</feature>
<feature type="disulfide bond" description="Interchain (with C-172); in homodimeric form">
    <location>
        <position position="71"/>
    </location>
</feature>
<feature type="disulfide bond" description="Interchain (with C-71); in homodimeric form">
    <location>
        <position position="172"/>
    </location>
</feature>
<protein>
    <recommendedName>
        <fullName>PGR5-like protein 1B, chloroplastic</fullName>
    </recommendedName>
    <alternativeName>
        <fullName>Ferredoxin-plastoquinone reductase 2</fullName>
    </alternativeName>
</protein>
<name>PGL1B_ARATH</name>
<gene>
    <name type="primary">PGRL1B</name>
    <name type="ordered locus">At4g11960</name>
    <name type="ORF">F16J13.30</name>
</gene>
<evidence type="ECO:0000250" key="1"/>
<evidence type="ECO:0000269" key="2">
    <source>
    </source>
</evidence>
<evidence type="ECO:0000269" key="3">
    <source>
    </source>
</evidence>
<evidence type="ECO:0000269" key="4">
    <source>
    </source>
</evidence>
<evidence type="ECO:0000305" key="5"/>
<evidence type="ECO:0007744" key="6">
    <source>
    </source>
</evidence>
<comment type="function">
    <text evidence="2 4">Ferredoxin-plastoquinone reductase involved in cyclic electron flow (CEF) around photosystem I. The homodimer is probably not involved in CEF.</text>
</comment>
<comment type="activity regulation">
    <text evidence="1">Inhibited by antimycin A.</text>
</comment>
<comment type="subunit">
    <text evidence="1 5">Homodimer and heterodimer with PGR5 (Probable). Interacts with PGR5, FD2, psaD1, LFNR1 and LFNR2. Also interacts with petC and a Fe-containing cofactor (FCC) (By similarity).</text>
</comment>
<comment type="subcellular location">
    <subcellularLocation>
        <location evidence="2">Plastid</location>
        <location evidence="2">Chloroplast thylakoid membrane</location>
        <topology evidence="2">Multi-pass membrane protein</topology>
    </subcellularLocation>
</comment>
<comment type="alternative products">
    <event type="alternative splicing"/>
    <isoform>
        <id>Q8GYC7-1</id>
        <name>1</name>
        <sequence type="displayed"/>
    </isoform>
    <text>A number of isoforms are produced. According to EST sequences.</text>
</comment>
<comment type="induction">
    <text evidence="3">Up-regulated by drought stress.</text>
</comment>
<comment type="domain">
    <text>The C-terminal loop (247-313) is required for ferredoxin binding.</text>
</comment>
<comment type="PTM">
    <text evidence="1">Disulfide bonds; Cys-289 and Cys-292 are probably involved in the formation of disulfide bridges with 'Cys-11' and 'Cys-105' of PGR5 while Cys-261 and Cys-264 are probably involved in the binding of a Fe-containing cofactor (FCC).</text>
</comment>
<comment type="disruption phenotype">
    <text evidence="2">No visible phenotype; due to the redundancy with PGRL1A. Pgrl1a and pgrl1b double mutant grows slowly and has pale green leaves.</text>
</comment>
<comment type="miscellaneous">
    <text evidence="1">Thioredoxins prevent homodimerization.</text>
</comment>
<comment type="similarity">
    <text evidence="5">Belongs to the PGR5 family.</text>
</comment>
<comment type="sequence caution" evidence="5">
    <conflict type="erroneous gene model prediction">
        <sequence resource="EMBL-CDS" id="CAB40937"/>
    </conflict>
</comment>
<comment type="sequence caution" evidence="5">
    <conflict type="erroneous gene model prediction">
        <sequence resource="EMBL-CDS" id="CAB78239"/>
    </conflict>
</comment>
<dbReference type="EMBL" id="AL049638">
    <property type="protein sequence ID" value="CAB40937.1"/>
    <property type="status" value="ALT_SEQ"/>
    <property type="molecule type" value="Genomic_DNA"/>
</dbReference>
<dbReference type="EMBL" id="AL161533">
    <property type="protein sequence ID" value="CAB78239.1"/>
    <property type="status" value="ALT_SEQ"/>
    <property type="molecule type" value="Genomic_DNA"/>
</dbReference>
<dbReference type="EMBL" id="CP002687">
    <property type="protein sequence ID" value="AEE83074.1"/>
    <property type="molecule type" value="Genomic_DNA"/>
</dbReference>
<dbReference type="EMBL" id="AK117721">
    <property type="protein sequence ID" value="BAC42372.1"/>
    <property type="molecule type" value="mRNA"/>
</dbReference>
<dbReference type="EMBL" id="BT005305">
    <property type="protein sequence ID" value="AAO63369.1"/>
    <property type="molecule type" value="mRNA"/>
</dbReference>
<dbReference type="PIR" id="T06603">
    <property type="entry name" value="T06603"/>
</dbReference>
<dbReference type="RefSeq" id="NP_192933.2">
    <molecule id="Q8GYC7-1"/>
    <property type="nucleotide sequence ID" value="NM_117266.4"/>
</dbReference>
<dbReference type="BioGRID" id="12101">
    <property type="interactions" value="14"/>
</dbReference>
<dbReference type="FunCoup" id="Q8GYC7">
    <property type="interactions" value="576"/>
</dbReference>
<dbReference type="IntAct" id="Q8GYC7">
    <property type="interactions" value="2"/>
</dbReference>
<dbReference type="STRING" id="3702.Q8GYC7"/>
<dbReference type="iPTMnet" id="Q8GYC7"/>
<dbReference type="PaxDb" id="3702-AT4G11960.1"/>
<dbReference type="ProteomicsDB" id="234717">
    <molecule id="Q8GYC7-1"/>
</dbReference>
<dbReference type="EnsemblPlants" id="AT4G11960.1">
    <molecule id="Q8GYC7-1"/>
    <property type="protein sequence ID" value="AT4G11960.1"/>
    <property type="gene ID" value="AT4G11960"/>
</dbReference>
<dbReference type="GeneID" id="826803"/>
<dbReference type="Gramene" id="AT4G11960.1">
    <molecule id="Q8GYC7-1"/>
    <property type="protein sequence ID" value="AT4G11960.1"/>
    <property type="gene ID" value="AT4G11960"/>
</dbReference>
<dbReference type="KEGG" id="ath:AT4G11960"/>
<dbReference type="Araport" id="AT4G11960"/>
<dbReference type="TAIR" id="AT4G11960">
    <property type="gene designation" value="PGRL1B"/>
</dbReference>
<dbReference type="eggNOG" id="ENOG502S909">
    <property type="taxonomic scope" value="Eukaryota"/>
</dbReference>
<dbReference type="InParanoid" id="Q8GYC7"/>
<dbReference type="OrthoDB" id="38589at2759"/>
<dbReference type="PhylomeDB" id="Q8GYC7"/>
<dbReference type="PRO" id="PR:Q8GYC7"/>
<dbReference type="Proteomes" id="UP000006548">
    <property type="component" value="Chromosome 4"/>
</dbReference>
<dbReference type="ExpressionAtlas" id="Q8GYC7">
    <property type="expression patterns" value="baseline and differential"/>
</dbReference>
<dbReference type="GO" id="GO:0009535">
    <property type="term" value="C:chloroplast thylakoid membrane"/>
    <property type="evidence" value="ECO:0007005"/>
    <property type="project" value="TAIR"/>
</dbReference>
<dbReference type="GO" id="GO:0005829">
    <property type="term" value="C:cytosol"/>
    <property type="evidence" value="ECO:0007005"/>
    <property type="project" value="TAIR"/>
</dbReference>
<dbReference type="GO" id="GO:0016730">
    <property type="term" value="F:oxidoreductase activity, acting on iron-sulfur proteins as donors"/>
    <property type="evidence" value="ECO:0007669"/>
    <property type="project" value="InterPro"/>
</dbReference>
<dbReference type="GO" id="GO:0009773">
    <property type="term" value="P:photosynthetic electron transport in photosystem I"/>
    <property type="evidence" value="ECO:0007669"/>
    <property type="project" value="InterPro"/>
</dbReference>
<dbReference type="InterPro" id="IPR039987">
    <property type="entry name" value="PGRL1"/>
</dbReference>
<dbReference type="PANTHER" id="PTHR31032">
    <property type="entry name" value="PGR5-LIKE PROTEIN 1B, CHLOROPLASTIC"/>
    <property type="match status" value="1"/>
</dbReference>
<dbReference type="PANTHER" id="PTHR31032:SF1">
    <property type="entry name" value="PGR5-LIKE PROTEIN 1B, CHLOROPLASTIC"/>
    <property type="match status" value="1"/>
</dbReference>
<keyword id="KW-0007">Acetylation</keyword>
<keyword id="KW-0025">Alternative splicing</keyword>
<keyword id="KW-0150">Chloroplast</keyword>
<keyword id="KW-1015">Disulfide bond</keyword>
<keyword id="KW-0249">Electron transport</keyword>
<keyword id="KW-0472">Membrane</keyword>
<keyword id="KW-0934">Plastid</keyword>
<keyword id="KW-1185">Reference proteome</keyword>
<keyword id="KW-0793">Thylakoid</keyword>
<keyword id="KW-0809">Transit peptide</keyword>
<keyword id="KW-0812">Transmembrane</keyword>
<keyword id="KW-1133">Transmembrane helix</keyword>
<keyword id="KW-0813">Transport</keyword>
<organism>
    <name type="scientific">Arabidopsis thaliana</name>
    <name type="common">Mouse-ear cress</name>
    <dbReference type="NCBI Taxonomy" id="3702"/>
    <lineage>
        <taxon>Eukaryota</taxon>
        <taxon>Viridiplantae</taxon>
        <taxon>Streptophyta</taxon>
        <taxon>Embryophyta</taxon>
        <taxon>Tracheophyta</taxon>
        <taxon>Spermatophyta</taxon>
        <taxon>Magnoliopsida</taxon>
        <taxon>eudicotyledons</taxon>
        <taxon>Gunneridae</taxon>
        <taxon>Pentapetalae</taxon>
        <taxon>rosids</taxon>
        <taxon>malvids</taxon>
        <taxon>Brassicales</taxon>
        <taxon>Brassicaceae</taxon>
        <taxon>Camelineae</taxon>
        <taxon>Arabidopsis</taxon>
    </lineage>
</organism>
<accession>Q8GYC7</accession>
<accession>Q9SZ61</accession>